<feature type="signal peptide" evidence="2">
    <location>
        <begin position="1"/>
        <end position="16"/>
    </location>
</feature>
<feature type="chain" id="PRO_0000419495" description="Transforming growth factor-beta receptor type 3-like protein" evidence="2">
    <location>
        <begin position="17"/>
        <end position="292"/>
    </location>
</feature>
<feature type="topological domain" description="Extracellular" evidence="2">
    <location>
        <begin position="17"/>
        <end position="244"/>
    </location>
</feature>
<feature type="transmembrane region" description="Helical" evidence="2">
    <location>
        <begin position="245"/>
        <end position="265"/>
    </location>
</feature>
<feature type="topological domain" description="Cytoplasmic" evidence="2">
    <location>
        <begin position="266"/>
        <end position="292"/>
    </location>
</feature>
<feature type="domain" description="ZP; truncated">
    <location>
        <begin position="17"/>
        <end position="170"/>
    </location>
</feature>
<feature type="region of interest" description="Disordered" evidence="3">
    <location>
        <begin position="160"/>
        <end position="236"/>
    </location>
</feature>
<feature type="region of interest" description="Disordered" evidence="3">
    <location>
        <begin position="273"/>
        <end position="292"/>
    </location>
</feature>
<feature type="compositionally biased region" description="Pro residues" evidence="3">
    <location>
        <begin position="164"/>
        <end position="175"/>
    </location>
</feature>
<feature type="compositionally biased region" description="Pro residues" evidence="3">
    <location>
        <begin position="213"/>
        <end position="222"/>
    </location>
</feature>
<feature type="compositionally biased region" description="Low complexity" evidence="3">
    <location>
        <begin position="281"/>
        <end position="292"/>
    </location>
</feature>
<feature type="disulfide bond" evidence="1">
    <location>
        <begin position="85"/>
        <end position="147"/>
    </location>
</feature>
<feature type="splice variant" id="VSP_061943" description="In isoform 2.">
    <original>MLGTVLLLALLPGITTLPSG</original>
    <variation>MGESAAATASLFQRRRRGRGGRVTFPGGLKGSARFLSFGPPFPA</variation>
    <location>
        <begin position="1"/>
        <end position="20"/>
    </location>
</feature>
<feature type="sequence conflict" description="In Ref. 4; BG752983." evidence="6" ref="4">
    <original>P</original>
    <variation>A</variation>
    <location>
        <position position="215"/>
    </location>
</feature>
<comment type="function">
    <text evidence="5">Expressed in gonadotrope cells, acts as an inhibin B coreceptor and regulates follicle-stimulating hormone (FSH) levels and female fertility.</text>
</comment>
<comment type="subcellular location">
    <subcellularLocation>
        <location evidence="4 5">Cell membrane</location>
        <topology evidence="2">Single-pass membrane protein</topology>
    </subcellularLocation>
</comment>
<comment type="alternative products">
    <event type="alternative splicing"/>
    <isoform>
        <id>H3BV60-1</id>
        <name>1</name>
        <sequence type="displayed"/>
    </isoform>
    <isoform>
        <id>H3BV60-2</id>
        <name>2</name>
        <sequence type="described" ref="VSP_061943"/>
    </isoform>
</comment>
<comment type="tissue specificity">
    <text evidence="4 5">Expressed in pituitary gland gonadotrope cells.</text>
</comment>
<comment type="PTM">
    <text evidence="5">Glycosylated.</text>
</comment>
<reference key="1">
    <citation type="journal article" date="2021" name="Sci. Adv.">
        <title>TGFBR3L is an inhibin B co-receptor that regulates female fertility.</title>
        <authorList>
            <person name="Brule E."/>
            <person name="Wang Y."/>
            <person name="Li Y."/>
            <person name="Lin Y.F."/>
            <person name="Zhou X."/>
            <person name="Ongaro L."/>
            <person name="Alonso C.A.I."/>
            <person name="Buddle E.R.S."/>
            <person name="Schneyer A.L."/>
            <person name="Byeon C.H."/>
            <person name="Hinck C.S."/>
            <person name="Mendelev N."/>
            <person name="Russell J.P."/>
            <person name="Cowan M."/>
            <person name="Boehm U."/>
            <person name="Ruf-Zamojski F."/>
            <person name="Zamojski M."/>
            <person name="Andoniadou C.L."/>
            <person name="Sealfon S.C."/>
            <person name="Harrison C.A."/>
            <person name="Walton K.L."/>
            <person name="Hinck A.P."/>
            <person name="Bernard D.J."/>
        </authorList>
    </citation>
    <scope>NUCLEOTIDE SEQUENCE [MRNA]</scope>
    <scope>ALTERNATIVE SPLICING</scope>
    <scope>FUNCTION</scope>
    <scope>TISSUE SPECIFICITY</scope>
    <scope>SUBCELLULAR LOCATION</scope>
    <scope>GLYCOSYLATION</scope>
</reference>
<reference key="2">
    <citation type="journal article" date="2004" name="Nature">
        <title>The DNA sequence and biology of human chromosome 19.</title>
        <authorList>
            <person name="Grimwood J."/>
            <person name="Gordon L.A."/>
            <person name="Olsen A.S."/>
            <person name="Terry A."/>
            <person name="Schmutz J."/>
            <person name="Lamerdin J.E."/>
            <person name="Hellsten U."/>
            <person name="Goodstein D."/>
            <person name="Couronne O."/>
            <person name="Tran-Gyamfi M."/>
            <person name="Aerts A."/>
            <person name="Altherr M."/>
            <person name="Ashworth L."/>
            <person name="Bajorek E."/>
            <person name="Black S."/>
            <person name="Branscomb E."/>
            <person name="Caenepeel S."/>
            <person name="Carrano A.V."/>
            <person name="Caoile C."/>
            <person name="Chan Y.M."/>
            <person name="Christensen M."/>
            <person name="Cleland C.A."/>
            <person name="Copeland A."/>
            <person name="Dalin E."/>
            <person name="Dehal P."/>
            <person name="Denys M."/>
            <person name="Detter J.C."/>
            <person name="Escobar J."/>
            <person name="Flowers D."/>
            <person name="Fotopulos D."/>
            <person name="Garcia C."/>
            <person name="Georgescu A.M."/>
            <person name="Glavina T."/>
            <person name="Gomez M."/>
            <person name="Gonzales E."/>
            <person name="Groza M."/>
            <person name="Hammon N."/>
            <person name="Hawkins T."/>
            <person name="Haydu L."/>
            <person name="Ho I."/>
            <person name="Huang W."/>
            <person name="Israni S."/>
            <person name="Jett J."/>
            <person name="Kadner K."/>
            <person name="Kimball H."/>
            <person name="Kobayashi A."/>
            <person name="Larionov V."/>
            <person name="Leem S.-H."/>
            <person name="Lopez F."/>
            <person name="Lou Y."/>
            <person name="Lowry S."/>
            <person name="Malfatti S."/>
            <person name="Martinez D."/>
            <person name="McCready P.M."/>
            <person name="Medina C."/>
            <person name="Morgan J."/>
            <person name="Nelson K."/>
            <person name="Nolan M."/>
            <person name="Ovcharenko I."/>
            <person name="Pitluck S."/>
            <person name="Pollard M."/>
            <person name="Popkie A.P."/>
            <person name="Predki P."/>
            <person name="Quan G."/>
            <person name="Ramirez L."/>
            <person name="Rash S."/>
            <person name="Retterer J."/>
            <person name="Rodriguez A."/>
            <person name="Rogers S."/>
            <person name="Salamov A."/>
            <person name="Salazar A."/>
            <person name="She X."/>
            <person name="Smith D."/>
            <person name="Slezak T."/>
            <person name="Solovyev V."/>
            <person name="Thayer N."/>
            <person name="Tice H."/>
            <person name="Tsai M."/>
            <person name="Ustaszewska A."/>
            <person name="Vo N."/>
            <person name="Wagner M."/>
            <person name="Wheeler J."/>
            <person name="Wu K."/>
            <person name="Xie G."/>
            <person name="Yang J."/>
            <person name="Dubchak I."/>
            <person name="Furey T.S."/>
            <person name="DeJong P."/>
            <person name="Dickson M."/>
            <person name="Gordon D."/>
            <person name="Eichler E.E."/>
            <person name="Pennacchio L.A."/>
            <person name="Richardson P."/>
            <person name="Stubbs L."/>
            <person name="Rokhsar D.S."/>
            <person name="Myers R.M."/>
            <person name="Rubin E.M."/>
            <person name="Lucas S.M."/>
        </authorList>
    </citation>
    <scope>NUCLEOTIDE SEQUENCE [LARGE SCALE GENOMIC DNA]</scope>
</reference>
<reference key="3">
    <citation type="journal article" date="2005" name="Genomics">
        <title>Discovery of 342 putative new genes from the analysis of 5'-end-sequenced full-length-enriched cDNA human transcripts.</title>
        <authorList>
            <person name="Dalla E."/>
            <person name="Mignone F."/>
            <person name="Verardo R."/>
            <person name="Marchionni L."/>
            <person name="Marzinotto S."/>
            <person name="Lazarevic D."/>
            <person name="Reid J.F."/>
            <person name="Marzio R."/>
            <person name="Klaric E."/>
            <person name="Licastro D."/>
            <person name="Marcuzzi G."/>
            <person name="Gambetta R."/>
            <person name="Pierotti M.A."/>
            <person name="Pesole G."/>
            <person name="Schneider C."/>
        </authorList>
    </citation>
    <scope>NUCLEOTIDE SEQUENCE [MRNA] OF 1-120</scope>
    <source>
        <tissue>Leukemia</tissue>
    </source>
</reference>
<reference key="4">
    <citation type="journal article" date="2004" name="Genome Res.">
        <title>The status, quality, and expansion of the NIH full-length cDNA project: the Mammalian Gene Collection (MGC).</title>
        <authorList>
            <consortium name="The MGC Project Team"/>
        </authorList>
    </citation>
    <scope>NUCLEOTIDE SEQUENCE [LARGE SCALE MRNA] OF 21-292</scope>
    <source>
        <tissue>Oligodendroglioma</tissue>
        <tissue>Retina</tissue>
    </source>
</reference>
<reference key="5">
    <citation type="journal article" date="2020" name="Cancers">
        <title>TGFBR3L-An Uncharacterised Pituitary Specific Membrane Protein Detected in the Gonadotroph Cells in Non-Neoplastic and Tumour Tissue.</title>
        <authorList>
            <person name="Sjoestedt E."/>
            <person name="Kolnes A.J."/>
            <person name="Olarescu N.C."/>
            <person name="Mitsios N."/>
            <person name="Hikmet F."/>
            <person name="Sivertsson A."/>
            <person name="Lindskog C."/>
            <person name="Oeystese K.A.B."/>
            <person name="Joergensen A.P."/>
            <person name="Bollerslev J."/>
            <person name="Casar-Borota O."/>
        </authorList>
    </citation>
    <scope>TISSUE SPECIFICITY</scope>
    <scope>SUBCELLULAR LOCATION</scope>
</reference>
<sequence length="292" mass="30175">MLGTVLLLALLPGITTLPSGPPAPPFPAAPGPWLRRPLFSLKLSDTEDVFPRRAGPLEVPADSRVFVQAALARPSPRWGLALHRCSVTPSSRPAPGPALALLREGCPADTSVAFPPPPPPSPGAARPARFSFRLRPVFNASVQFLHCQLSRCRRLRGVRRAPAPLTPPPPPPPSRCLPQDEACADTGSGSAEGLAADGPHLHTLTQPIVVTVPRPPPRPPKSVPGRAVRPEPPAPAPAALEPAPVVALVLAAFVLGAALAAGLGLVCAHSAPHAPGPPARASPSGPQPRRSQ</sequence>
<name>TGR3L_HUMAN</name>
<keyword id="KW-0025">Alternative splicing</keyword>
<keyword id="KW-1003">Cell membrane</keyword>
<keyword id="KW-1015">Disulfide bond</keyword>
<keyword id="KW-0472">Membrane</keyword>
<keyword id="KW-1267">Proteomics identification</keyword>
<keyword id="KW-1185">Reference proteome</keyword>
<keyword id="KW-0732">Signal</keyword>
<keyword id="KW-0812">Transmembrane</keyword>
<keyword id="KW-1133">Transmembrane helix</keyword>
<protein>
    <recommendedName>
        <fullName>Transforming growth factor-beta receptor type 3-like protein</fullName>
    </recommendedName>
    <alternativeName>
        <fullName>TGF-beta receptor type-3-like protein</fullName>
        <shortName>TGFR-3L</shortName>
    </alternativeName>
    <alternativeName>
        <fullName>Transforming growth factor-beta receptor type III-like protein</fullName>
        <shortName>TGF-beta receptor type III-like protein</shortName>
    </alternativeName>
</protein>
<proteinExistence type="evidence at protein level"/>
<evidence type="ECO:0000250" key="1">
    <source>
        <dbReference type="UniProtKB" id="Q03167"/>
    </source>
</evidence>
<evidence type="ECO:0000255" key="2"/>
<evidence type="ECO:0000256" key="3">
    <source>
        <dbReference type="SAM" id="MobiDB-lite"/>
    </source>
</evidence>
<evidence type="ECO:0000269" key="4">
    <source>
    </source>
</evidence>
<evidence type="ECO:0000269" key="5">
    <source>
    </source>
</evidence>
<evidence type="ECO:0000305" key="6"/>
<evidence type="ECO:0000312" key="7">
    <source>
        <dbReference type="HGNC" id="HGNC:44152"/>
    </source>
</evidence>
<gene>
    <name evidence="7" type="primary">TGFBR3L</name>
</gene>
<organism>
    <name type="scientific">Homo sapiens</name>
    <name type="common">Human</name>
    <dbReference type="NCBI Taxonomy" id="9606"/>
    <lineage>
        <taxon>Eukaryota</taxon>
        <taxon>Metazoa</taxon>
        <taxon>Chordata</taxon>
        <taxon>Craniata</taxon>
        <taxon>Vertebrata</taxon>
        <taxon>Euteleostomi</taxon>
        <taxon>Mammalia</taxon>
        <taxon>Eutheria</taxon>
        <taxon>Euarchontoglires</taxon>
        <taxon>Primates</taxon>
        <taxon>Haplorrhini</taxon>
        <taxon>Catarrhini</taxon>
        <taxon>Hominidae</taxon>
        <taxon>Homo</taxon>
    </lineage>
</organism>
<dbReference type="EMBL" id="AC010336">
    <property type="status" value="NOT_ANNOTATED_CDS"/>
    <property type="molecule type" value="Genomic_DNA"/>
</dbReference>
<dbReference type="EMBL" id="DR033794">
    <property type="status" value="NOT_ANNOTATED_CDS"/>
    <property type="molecule type" value="mRNA"/>
</dbReference>
<dbReference type="EMBL" id="AI536712">
    <property type="status" value="NOT_ANNOTATED_CDS"/>
    <property type="molecule type" value="mRNA"/>
</dbReference>
<dbReference type="EMBL" id="BG752983">
    <property type="status" value="NOT_ANNOTATED_CDS"/>
    <property type="molecule type" value="mRNA"/>
</dbReference>
<dbReference type="CCDS" id="CCDS58648.1">
    <molecule id="H3BV60-2"/>
</dbReference>
<dbReference type="RefSeq" id="NP_001182188.1">
    <molecule id="H3BV60-2"/>
    <property type="nucleotide sequence ID" value="NM_001195259.2"/>
</dbReference>
<dbReference type="RefSeq" id="NP_001406710.1">
    <molecule id="H3BV60-1"/>
    <property type="nucleotide sequence ID" value="NM_001419781.1"/>
</dbReference>
<dbReference type="SMR" id="H3BV60"/>
<dbReference type="FunCoup" id="H3BV60">
    <property type="interactions" value="13"/>
</dbReference>
<dbReference type="GlyGen" id="H3BV60">
    <property type="glycosylation" value="1 site"/>
</dbReference>
<dbReference type="iPTMnet" id="H3BV60"/>
<dbReference type="PhosphoSitePlus" id="H3BV60"/>
<dbReference type="BioMuta" id="TGFBR3L"/>
<dbReference type="MassIVE" id="H3BV60"/>
<dbReference type="PaxDb" id="9606-ENSP00000457962"/>
<dbReference type="PeptideAtlas" id="H3BV60"/>
<dbReference type="Antibodypedia" id="77247">
    <property type="antibodies" value="8 antibodies from 5 providers"/>
</dbReference>
<dbReference type="DNASU" id="100507588"/>
<dbReference type="Ensembl" id="ENST00000713907.1">
    <molecule id="H3BV60-1"/>
    <property type="protein sequence ID" value="ENSP00000519206.1"/>
    <property type="gene ID" value="ENSG00000260001.8"/>
</dbReference>
<dbReference type="GeneID" id="100507588"/>
<dbReference type="KEGG" id="hsa:100507588"/>
<dbReference type="MANE-Select" id="ENST00000713907.1">
    <property type="protein sequence ID" value="ENSP00000519206.1"/>
    <property type="RefSeq nucleotide sequence ID" value="NM_001419781.1"/>
    <property type="RefSeq protein sequence ID" value="NP_001406710.1"/>
</dbReference>
<dbReference type="UCSC" id="uc021uoa.2">
    <molecule id="H3BV60-1"/>
    <property type="organism name" value="human"/>
</dbReference>
<dbReference type="AGR" id="HGNC:44152"/>
<dbReference type="CTD" id="100507588"/>
<dbReference type="DisGeNET" id="100507588"/>
<dbReference type="GeneCards" id="TGFBR3L"/>
<dbReference type="HGNC" id="HGNC:44152">
    <property type="gene designation" value="TGFBR3L"/>
</dbReference>
<dbReference type="HPA" id="ENSG00000260001">
    <property type="expression patterns" value="Tissue enriched (pituitary)"/>
</dbReference>
<dbReference type="neXtProt" id="NX_H3BV60"/>
<dbReference type="OpenTargets" id="ENSG00000260001"/>
<dbReference type="VEuPathDB" id="HostDB:ENSG00000260001"/>
<dbReference type="eggNOG" id="ENOG502R0RG">
    <property type="taxonomic scope" value="Eukaryota"/>
</dbReference>
<dbReference type="GeneTree" id="ENSGT00530000063861"/>
<dbReference type="HOGENOM" id="CLU_084653_0_0_1"/>
<dbReference type="InParanoid" id="H3BV60"/>
<dbReference type="OMA" id="HCQISRC"/>
<dbReference type="OrthoDB" id="8963415at2759"/>
<dbReference type="PAN-GO" id="H3BV60">
    <property type="GO annotations" value="10 GO annotations based on evolutionary models"/>
</dbReference>
<dbReference type="PhylomeDB" id="H3BV60"/>
<dbReference type="PathwayCommons" id="H3BV60"/>
<dbReference type="BioGRID-ORCS" id="100507588">
    <property type="hits" value="19 hits in 1141 CRISPR screens"/>
</dbReference>
<dbReference type="ChiTaRS" id="TGFBR3L">
    <property type="organism name" value="human"/>
</dbReference>
<dbReference type="GenomeRNAi" id="100507588"/>
<dbReference type="Pharos" id="H3BV60">
    <property type="development level" value="Tdark"/>
</dbReference>
<dbReference type="PRO" id="PR:H3BV60"/>
<dbReference type="Proteomes" id="UP000005640">
    <property type="component" value="Chromosome 19"/>
</dbReference>
<dbReference type="RNAct" id="H3BV60">
    <property type="molecule type" value="protein"/>
</dbReference>
<dbReference type="Bgee" id="ENSG00000260001">
    <property type="expression patterns" value="Expressed in pituitary gland and 93 other cell types or tissues"/>
</dbReference>
<dbReference type="GO" id="GO:0005886">
    <property type="term" value="C:plasma membrane"/>
    <property type="evidence" value="ECO:0007669"/>
    <property type="project" value="UniProtKB-SubCell"/>
</dbReference>
<dbReference type="GO" id="GO:0005539">
    <property type="term" value="F:glycosaminoglycan binding"/>
    <property type="evidence" value="ECO:0000318"/>
    <property type="project" value="GO_Central"/>
</dbReference>
<dbReference type="GO" id="GO:0005024">
    <property type="term" value="F:transforming growth factor beta receptor activity"/>
    <property type="evidence" value="ECO:0000318"/>
    <property type="project" value="GO_Central"/>
</dbReference>
<dbReference type="GO" id="GO:0005114">
    <property type="term" value="F:type II transforming growth factor beta receptor binding"/>
    <property type="evidence" value="ECO:0000318"/>
    <property type="project" value="GO_Central"/>
</dbReference>
<dbReference type="GO" id="GO:0016477">
    <property type="term" value="P:cell migration"/>
    <property type="evidence" value="ECO:0000318"/>
    <property type="project" value="GO_Central"/>
</dbReference>
<dbReference type="GO" id="GO:0001837">
    <property type="term" value="P:epithelial to mesenchymal transition"/>
    <property type="evidence" value="ECO:0000318"/>
    <property type="project" value="GO_Central"/>
</dbReference>
<dbReference type="GO" id="GO:0017015">
    <property type="term" value="P:regulation of transforming growth factor beta receptor signaling pathway"/>
    <property type="evidence" value="ECO:0000318"/>
    <property type="project" value="GO_Central"/>
</dbReference>
<dbReference type="GO" id="GO:0007179">
    <property type="term" value="P:transforming growth factor beta receptor signaling pathway"/>
    <property type="evidence" value="ECO:0000318"/>
    <property type="project" value="GO_Central"/>
</dbReference>
<dbReference type="Gene3D" id="2.60.40.4100">
    <property type="entry name" value="Zona pellucida, ZP-C domain"/>
    <property type="match status" value="1"/>
</dbReference>
<dbReference type="InterPro" id="IPR055355">
    <property type="entry name" value="ZP-C"/>
</dbReference>
<dbReference type="InterPro" id="IPR042235">
    <property type="entry name" value="ZP-C_dom"/>
</dbReference>
<dbReference type="PANTHER" id="PTHR14002">
    <property type="entry name" value="ENDOGLIN/TGF-BETA RECEPTOR TYPE III"/>
    <property type="match status" value="1"/>
</dbReference>
<dbReference type="PANTHER" id="PTHR14002:SF9">
    <property type="entry name" value="TRANSFORMING GROWTH FACTOR-BETA RECEPTOR TYPE 3-LIKE PROTEIN"/>
    <property type="match status" value="1"/>
</dbReference>
<dbReference type="Pfam" id="PF00100">
    <property type="entry name" value="Zona_pellucida"/>
    <property type="match status" value="1"/>
</dbReference>
<accession>H3BV60</accession>